<comment type="subcellular location">
    <subcellularLocation>
        <location evidence="1">Cell outer membrane</location>
        <topology evidence="1">Multi-pass membrane protein</topology>
    </subcellularLocation>
</comment>
<comment type="similarity">
    <text evidence="2">Belongs to the outer membrane OOP (TC 1.B.6) superfamily. OmpX family.</text>
</comment>
<feature type="signal peptide" evidence="1">
    <location>
        <begin position="1"/>
        <end position="23"/>
    </location>
</feature>
<feature type="chain" id="PRO_0000020202" description="Outer membrane protein X">
    <location>
        <begin position="24"/>
        <end position="171"/>
    </location>
</feature>
<feature type="topological domain" description="Periplasmic" evidence="1">
    <location>
        <begin position="24"/>
        <end position="25"/>
    </location>
</feature>
<feature type="transmembrane region" description="Beta stranded" evidence="1">
    <location>
        <begin position="26"/>
        <end position="35"/>
    </location>
</feature>
<feature type="topological domain" description="Extracellular" evidence="1">
    <location>
        <begin position="36"/>
        <end position="44"/>
    </location>
</feature>
<feature type="transmembrane region" description="Beta stranded" evidence="1">
    <location>
        <begin position="45"/>
        <end position="54"/>
    </location>
</feature>
<feature type="topological domain" description="Periplasmic" evidence="1">
    <location>
        <begin position="55"/>
        <end position="59"/>
    </location>
</feature>
<feature type="transmembrane region" description="Beta stranded" evidence="1">
    <location>
        <begin position="60"/>
        <end position="69"/>
    </location>
</feature>
<feature type="topological domain" description="Extracellular" evidence="1">
    <location>
        <begin position="70"/>
        <end position="85"/>
    </location>
</feature>
<feature type="transmembrane region" description="Beta stranded" evidence="1">
    <location>
        <begin position="86"/>
        <end position="95"/>
    </location>
</feature>
<feature type="topological domain" description="Periplasmic" evidence="1">
    <location>
        <begin position="96"/>
        <end position="99"/>
    </location>
</feature>
<feature type="transmembrane region" description="Beta stranded" evidence="1">
    <location>
        <begin position="100"/>
        <end position="109"/>
    </location>
</feature>
<feature type="topological domain" description="Extracellular" evidence="1">
    <location>
        <begin position="110"/>
        <end position="129"/>
    </location>
</feature>
<feature type="transmembrane region" description="Beta stranded" evidence="1">
    <location>
        <begin position="130"/>
        <end position="139"/>
    </location>
</feature>
<feature type="topological domain" description="Periplasmic" evidence="1">
    <location>
        <begin position="140"/>
        <end position="143"/>
    </location>
</feature>
<feature type="transmembrane region" description="Beta stranded" evidence="1">
    <location>
        <begin position="144"/>
        <end position="153"/>
    </location>
</feature>
<feature type="topological domain" description="Extracellular" evidence="1">
    <location>
        <begin position="154"/>
        <end position="160"/>
    </location>
</feature>
<feature type="transmembrane region" description="Beta stranded" evidence="1">
    <location>
        <begin position="161"/>
        <end position="170"/>
    </location>
</feature>
<feature type="topological domain" description="Periplasmic" evidence="1">
    <location>
        <position position="171"/>
    </location>
</feature>
<dbReference type="EMBL" id="AE005674">
    <property type="protein sequence ID" value="AAN42399.2"/>
    <property type="molecule type" value="Genomic_DNA"/>
</dbReference>
<dbReference type="EMBL" id="AE014073">
    <property type="protein sequence ID" value="AAP16275.1"/>
    <property type="molecule type" value="Genomic_DNA"/>
</dbReference>
<dbReference type="RefSeq" id="NP_706692.2">
    <property type="nucleotide sequence ID" value="NC_004337.2"/>
</dbReference>
<dbReference type="RefSeq" id="WP_001295296.1">
    <property type="nucleotide sequence ID" value="NZ_WPGW01000128.1"/>
</dbReference>
<dbReference type="BMRB" id="P0A920"/>
<dbReference type="SMR" id="P0A920"/>
<dbReference type="STRING" id="198214.SF0765"/>
<dbReference type="PaxDb" id="198214-SF0765"/>
<dbReference type="GeneID" id="1023752"/>
<dbReference type="GeneID" id="93776613"/>
<dbReference type="KEGG" id="sfl:SF0765"/>
<dbReference type="KEGG" id="sfx:S0807"/>
<dbReference type="PATRIC" id="fig|198214.7.peg.889"/>
<dbReference type="HOGENOM" id="CLU_099385_1_0_6"/>
<dbReference type="Proteomes" id="UP000001006">
    <property type="component" value="Chromosome"/>
</dbReference>
<dbReference type="Proteomes" id="UP000002673">
    <property type="component" value="Chromosome"/>
</dbReference>
<dbReference type="GO" id="GO:0009279">
    <property type="term" value="C:cell outer membrane"/>
    <property type="evidence" value="ECO:0007669"/>
    <property type="project" value="UniProtKB-SubCell"/>
</dbReference>
<dbReference type="GO" id="GO:0044384">
    <property type="term" value="C:host outer membrane"/>
    <property type="evidence" value="ECO:0007669"/>
    <property type="project" value="InterPro"/>
</dbReference>
<dbReference type="Gene3D" id="2.40.160.20">
    <property type="match status" value="1"/>
</dbReference>
<dbReference type="InterPro" id="IPR051723">
    <property type="entry name" value="Bact_OM_Invasion-Related"/>
</dbReference>
<dbReference type="InterPro" id="IPR000758">
    <property type="entry name" value="Enterovir_OMP"/>
</dbReference>
<dbReference type="InterPro" id="IPR011250">
    <property type="entry name" value="OMP/PagP_b-brl"/>
</dbReference>
<dbReference type="InterPro" id="IPR027385">
    <property type="entry name" value="OMP_b-brl"/>
</dbReference>
<dbReference type="NCBIfam" id="NF006917">
    <property type="entry name" value="PRK09408.1"/>
    <property type="match status" value="1"/>
</dbReference>
<dbReference type="PANTHER" id="PTHR35892">
    <property type="entry name" value="OUTER MEMBRANE PROTEIN PAGN-RELATED"/>
    <property type="match status" value="1"/>
</dbReference>
<dbReference type="PANTHER" id="PTHR35892:SF3">
    <property type="entry name" value="OUTER MEMBRANE PROTEIN X"/>
    <property type="match status" value="1"/>
</dbReference>
<dbReference type="Pfam" id="PF13505">
    <property type="entry name" value="OMP_b-brl"/>
    <property type="match status" value="1"/>
</dbReference>
<dbReference type="PRINTS" id="PR00316">
    <property type="entry name" value="ENTEROVIROMP"/>
</dbReference>
<dbReference type="SUPFAM" id="SSF56925">
    <property type="entry name" value="OMPA-like"/>
    <property type="match status" value="1"/>
</dbReference>
<dbReference type="PROSITE" id="PS00694">
    <property type="entry name" value="ENT_VIR_OMP_1"/>
    <property type="match status" value="1"/>
</dbReference>
<dbReference type="PROSITE" id="PS00695">
    <property type="entry name" value="ENT_VIR_OMP_2"/>
    <property type="match status" value="1"/>
</dbReference>
<accession>P0A920</accession>
<accession>P36546</accession>
<keyword id="KW-0998">Cell outer membrane</keyword>
<keyword id="KW-0472">Membrane</keyword>
<keyword id="KW-1185">Reference proteome</keyword>
<keyword id="KW-0732">Signal</keyword>
<keyword id="KW-0812">Transmembrane</keyword>
<keyword id="KW-1134">Transmembrane beta strand</keyword>
<gene>
    <name type="primary">ompX</name>
    <name type="ordered locus">SF0765</name>
    <name type="ordered locus">S0807</name>
</gene>
<evidence type="ECO:0000250" key="1"/>
<evidence type="ECO:0000305" key="2"/>
<name>OMPX_SHIFL</name>
<protein>
    <recommendedName>
        <fullName>Outer membrane protein X</fullName>
    </recommendedName>
</protein>
<proteinExistence type="inferred from homology"/>
<reference key="1">
    <citation type="journal article" date="2002" name="Nucleic Acids Res.">
        <title>Genome sequence of Shigella flexneri 2a: insights into pathogenicity through comparison with genomes of Escherichia coli K12 and O157.</title>
        <authorList>
            <person name="Jin Q."/>
            <person name="Yuan Z."/>
            <person name="Xu J."/>
            <person name="Wang Y."/>
            <person name="Shen Y."/>
            <person name="Lu W."/>
            <person name="Wang J."/>
            <person name="Liu H."/>
            <person name="Yang J."/>
            <person name="Yang F."/>
            <person name="Zhang X."/>
            <person name="Zhang J."/>
            <person name="Yang G."/>
            <person name="Wu H."/>
            <person name="Qu D."/>
            <person name="Dong J."/>
            <person name="Sun L."/>
            <person name="Xue Y."/>
            <person name="Zhao A."/>
            <person name="Gao Y."/>
            <person name="Zhu J."/>
            <person name="Kan B."/>
            <person name="Ding K."/>
            <person name="Chen S."/>
            <person name="Cheng H."/>
            <person name="Yao Z."/>
            <person name="He B."/>
            <person name="Chen R."/>
            <person name="Ma D."/>
            <person name="Qiang B."/>
            <person name="Wen Y."/>
            <person name="Hou Y."/>
            <person name="Yu J."/>
        </authorList>
    </citation>
    <scope>NUCLEOTIDE SEQUENCE [LARGE SCALE GENOMIC DNA]</scope>
    <source>
        <strain>301 / Serotype 2a</strain>
    </source>
</reference>
<reference key="2">
    <citation type="journal article" date="2003" name="Infect. Immun.">
        <title>Complete genome sequence and comparative genomics of Shigella flexneri serotype 2a strain 2457T.</title>
        <authorList>
            <person name="Wei J."/>
            <person name="Goldberg M.B."/>
            <person name="Burland V."/>
            <person name="Venkatesan M.M."/>
            <person name="Deng W."/>
            <person name="Fournier G."/>
            <person name="Mayhew G.F."/>
            <person name="Plunkett G. III"/>
            <person name="Rose D.J."/>
            <person name="Darling A."/>
            <person name="Mau B."/>
            <person name="Perna N.T."/>
            <person name="Payne S.M."/>
            <person name="Runyen-Janecky L.J."/>
            <person name="Zhou S."/>
            <person name="Schwartz D.C."/>
            <person name="Blattner F.R."/>
        </authorList>
    </citation>
    <scope>NUCLEOTIDE SEQUENCE [LARGE SCALE GENOMIC DNA]</scope>
    <source>
        <strain>ATCC 700930 / 2457T / Serotype 2a</strain>
    </source>
</reference>
<sequence length="171" mass="18603">MKKIACLSALAAVLAFTAGTSVAATSTVTGGYAQSDAQGQMNKMGGFNLKYRYEEDNSPLGVIGSFTYTEKSRTASSGDYNKNQYYGITAGPAYRINDWASIYGVVGVGYGKFQTTEYPTYKHDTSDYGFSYGAGLQFNPMENVALDFSYEQSRIRSVDVGTWIAGVGYRF</sequence>
<organism>
    <name type="scientific">Shigella flexneri</name>
    <dbReference type="NCBI Taxonomy" id="623"/>
    <lineage>
        <taxon>Bacteria</taxon>
        <taxon>Pseudomonadati</taxon>
        <taxon>Pseudomonadota</taxon>
        <taxon>Gammaproteobacteria</taxon>
        <taxon>Enterobacterales</taxon>
        <taxon>Enterobacteriaceae</taxon>
        <taxon>Shigella</taxon>
    </lineage>
</organism>